<feature type="chain" id="PRO_1000130741" description="Nucleotide-binding protein CLH_3092">
    <location>
        <begin position="1"/>
        <end position="294"/>
    </location>
</feature>
<feature type="binding site" evidence="1">
    <location>
        <begin position="8"/>
        <end position="15"/>
    </location>
    <ligand>
        <name>ATP</name>
        <dbReference type="ChEBI" id="CHEBI:30616"/>
    </ligand>
</feature>
<feature type="binding site" evidence="1">
    <location>
        <begin position="59"/>
        <end position="62"/>
    </location>
    <ligand>
        <name>GTP</name>
        <dbReference type="ChEBI" id="CHEBI:37565"/>
    </ligand>
</feature>
<proteinExistence type="inferred from homology"/>
<name>Y3092_CLOBA</name>
<evidence type="ECO:0000255" key="1">
    <source>
        <dbReference type="HAMAP-Rule" id="MF_00636"/>
    </source>
</evidence>
<accession>B2UZY3</accession>
<comment type="function">
    <text evidence="1">Displays ATPase and GTPase activities.</text>
</comment>
<comment type="similarity">
    <text evidence="1">Belongs to the RapZ-like family.</text>
</comment>
<sequence length="294" mass="33842">MRFVIVTGLSGAGKTQATRSLEDLGYFCVDNLPPKLINKFAELCSQGDGKIDKVALVIDIRGGVFFDDLFETLNYLKENEFKYEILFLDASDEVLIKRFKESRRSHPLSPDGRVLNGIIQERSKLREIKDRADIIIDTSKYAIRDLREKMNEHYGDNIESEKQLSITVLSFGFKYGIPVDSDLVFDVRFIPNPFYIPELKQYSGNDKSVKDYVLKQEETITFVEKLQDMLEYLVPNYIKEGKRQLIISIGCTGGRHRSVAIANEIYERLNKGNYKAKIEHRDVGEDLHRGEKKL</sequence>
<dbReference type="EMBL" id="CP001078">
    <property type="protein sequence ID" value="ACD53217.1"/>
    <property type="molecule type" value="Genomic_DNA"/>
</dbReference>
<dbReference type="SMR" id="B2UZY3"/>
<dbReference type="KEGG" id="cbt:CLH_3092"/>
<dbReference type="HOGENOM" id="CLU_059558_0_0_9"/>
<dbReference type="GO" id="GO:0005524">
    <property type="term" value="F:ATP binding"/>
    <property type="evidence" value="ECO:0007669"/>
    <property type="project" value="UniProtKB-UniRule"/>
</dbReference>
<dbReference type="GO" id="GO:0005525">
    <property type="term" value="F:GTP binding"/>
    <property type="evidence" value="ECO:0007669"/>
    <property type="project" value="UniProtKB-UniRule"/>
</dbReference>
<dbReference type="Gene3D" id="3.40.50.300">
    <property type="entry name" value="P-loop containing nucleotide triphosphate hydrolases"/>
    <property type="match status" value="1"/>
</dbReference>
<dbReference type="HAMAP" id="MF_00636">
    <property type="entry name" value="RapZ_like"/>
    <property type="match status" value="1"/>
</dbReference>
<dbReference type="InterPro" id="IPR027417">
    <property type="entry name" value="P-loop_NTPase"/>
</dbReference>
<dbReference type="InterPro" id="IPR005337">
    <property type="entry name" value="RapZ-like"/>
</dbReference>
<dbReference type="InterPro" id="IPR053930">
    <property type="entry name" value="RapZ-like_N"/>
</dbReference>
<dbReference type="InterPro" id="IPR053931">
    <property type="entry name" value="RapZ_C"/>
</dbReference>
<dbReference type="NCBIfam" id="NF003828">
    <property type="entry name" value="PRK05416.1"/>
    <property type="match status" value="1"/>
</dbReference>
<dbReference type="PANTHER" id="PTHR30448">
    <property type="entry name" value="RNASE ADAPTER PROTEIN RAPZ"/>
    <property type="match status" value="1"/>
</dbReference>
<dbReference type="PANTHER" id="PTHR30448:SF0">
    <property type="entry name" value="RNASE ADAPTER PROTEIN RAPZ"/>
    <property type="match status" value="1"/>
</dbReference>
<dbReference type="Pfam" id="PF22740">
    <property type="entry name" value="PapZ_C"/>
    <property type="match status" value="1"/>
</dbReference>
<dbReference type="Pfam" id="PF03668">
    <property type="entry name" value="RapZ-like_N"/>
    <property type="match status" value="1"/>
</dbReference>
<dbReference type="PIRSF" id="PIRSF005052">
    <property type="entry name" value="P-loopkin"/>
    <property type="match status" value="1"/>
</dbReference>
<dbReference type="SUPFAM" id="SSF52540">
    <property type="entry name" value="P-loop containing nucleoside triphosphate hydrolases"/>
    <property type="match status" value="1"/>
</dbReference>
<organism>
    <name type="scientific">Clostridium botulinum (strain Alaska E43 / Type E3)</name>
    <dbReference type="NCBI Taxonomy" id="508767"/>
    <lineage>
        <taxon>Bacteria</taxon>
        <taxon>Bacillati</taxon>
        <taxon>Bacillota</taxon>
        <taxon>Clostridia</taxon>
        <taxon>Eubacteriales</taxon>
        <taxon>Clostridiaceae</taxon>
        <taxon>Clostridium</taxon>
    </lineage>
</organism>
<gene>
    <name type="ordered locus">CLH_3092</name>
</gene>
<keyword id="KW-0067">ATP-binding</keyword>
<keyword id="KW-0342">GTP-binding</keyword>
<keyword id="KW-0547">Nucleotide-binding</keyword>
<protein>
    <recommendedName>
        <fullName evidence="1">Nucleotide-binding protein CLH_3092</fullName>
    </recommendedName>
</protein>
<reference key="1">
    <citation type="submission" date="2008-05" db="EMBL/GenBank/DDBJ databases">
        <title>Complete genome sequence of Clostridium botulinum E3 str. Alaska E43.</title>
        <authorList>
            <person name="Brinkac L.M."/>
            <person name="Brown J.L."/>
            <person name="Bruce D."/>
            <person name="Detter C."/>
            <person name="Munk C."/>
            <person name="Smith L.A."/>
            <person name="Smith T.J."/>
            <person name="Sutton G."/>
            <person name="Brettin T.S."/>
        </authorList>
    </citation>
    <scope>NUCLEOTIDE SEQUENCE [LARGE SCALE GENOMIC DNA]</scope>
    <source>
        <strain>Alaska E43 / Type E3</strain>
    </source>
</reference>